<organism>
    <name type="scientific">Zygosaccharomyces bailii</name>
    <dbReference type="NCBI Taxonomy" id="4954"/>
    <lineage>
        <taxon>Eukaryota</taxon>
        <taxon>Fungi</taxon>
        <taxon>Dikarya</taxon>
        <taxon>Ascomycota</taxon>
        <taxon>Saccharomycotina</taxon>
        <taxon>Saccharomycetes</taxon>
        <taxon>Saccharomycetales</taxon>
        <taxon>Saccharomycetaceae</taxon>
        <taxon>Zygosaccharomyces</taxon>
    </lineage>
</organism>
<evidence type="ECO:0000250" key="1"/>
<evidence type="ECO:0000305" key="2"/>
<protein>
    <recommendedName>
        <fullName>Triosephosphate isomerase</fullName>
        <shortName>TIM</shortName>
        <ecNumber>5.3.1.1</ecNumber>
    </recommendedName>
    <alternativeName>
        <fullName>Triose-phosphate isomerase</fullName>
    </alternativeName>
</protein>
<sequence>MARTFFVGGNFKLNGTKSSIKEIVERLNNAKLDPKVEVVLCPPAPYLDYTVSLVKKSQVSVGAQNAYLKASGAFTGENSVDQIKDVGAKWVILGHSERRQYFREDDQLIAEKTAFALSQGVGVILCIGETLDQKKAGTTLQVVERQLQAVIDKVKDWSNVVIAYEPVWAIGTGLAATPEDAQEIHHSIREFLAKKLGEKTAQETRILYGGSANGKNAVTFKDKPDVDGFLVGGASLKPEFVDIINSRS</sequence>
<comment type="catalytic activity">
    <reaction>
        <text>D-glyceraldehyde 3-phosphate = dihydroxyacetone phosphate</text>
        <dbReference type="Rhea" id="RHEA:18585"/>
        <dbReference type="ChEBI" id="CHEBI:57642"/>
        <dbReference type="ChEBI" id="CHEBI:59776"/>
        <dbReference type="EC" id="5.3.1.1"/>
    </reaction>
</comment>
<comment type="pathway">
    <text>Carbohydrate biosynthesis; gluconeogenesis.</text>
</comment>
<comment type="pathway">
    <text>Carbohydrate degradation; glycolysis; D-glyceraldehyde 3-phosphate from glycerone phosphate: step 1/1.</text>
</comment>
<comment type="subunit">
    <text evidence="1">Homodimer.</text>
</comment>
<comment type="similarity">
    <text evidence="2">Belongs to the triosephosphate isomerase family.</text>
</comment>
<accession>Q9C401</accession>
<proteinExistence type="inferred from homology"/>
<dbReference type="EC" id="5.3.1.1"/>
<dbReference type="EMBL" id="AF325852">
    <property type="protein sequence ID" value="AAG50278.1"/>
    <property type="molecule type" value="Genomic_DNA"/>
</dbReference>
<dbReference type="SMR" id="Q9C401"/>
<dbReference type="UniPathway" id="UPA00109">
    <property type="reaction ID" value="UER00189"/>
</dbReference>
<dbReference type="UniPathway" id="UPA00138"/>
<dbReference type="GO" id="GO:0005829">
    <property type="term" value="C:cytosol"/>
    <property type="evidence" value="ECO:0007669"/>
    <property type="project" value="TreeGrafter"/>
</dbReference>
<dbReference type="GO" id="GO:0004807">
    <property type="term" value="F:triose-phosphate isomerase activity"/>
    <property type="evidence" value="ECO:0007669"/>
    <property type="project" value="UniProtKB-EC"/>
</dbReference>
<dbReference type="GO" id="GO:0006094">
    <property type="term" value="P:gluconeogenesis"/>
    <property type="evidence" value="ECO:0007669"/>
    <property type="project" value="UniProtKB-UniPathway"/>
</dbReference>
<dbReference type="GO" id="GO:0046166">
    <property type="term" value="P:glyceraldehyde-3-phosphate biosynthetic process"/>
    <property type="evidence" value="ECO:0007669"/>
    <property type="project" value="TreeGrafter"/>
</dbReference>
<dbReference type="GO" id="GO:0019563">
    <property type="term" value="P:glycerol catabolic process"/>
    <property type="evidence" value="ECO:0007669"/>
    <property type="project" value="TreeGrafter"/>
</dbReference>
<dbReference type="GO" id="GO:0006096">
    <property type="term" value="P:glycolytic process"/>
    <property type="evidence" value="ECO:0007669"/>
    <property type="project" value="UniProtKB-UniPathway"/>
</dbReference>
<dbReference type="CDD" id="cd00311">
    <property type="entry name" value="TIM"/>
    <property type="match status" value="1"/>
</dbReference>
<dbReference type="FunFam" id="3.20.20.70:FF:000025">
    <property type="entry name" value="Triosephosphate isomerase"/>
    <property type="match status" value="1"/>
</dbReference>
<dbReference type="Gene3D" id="3.20.20.70">
    <property type="entry name" value="Aldolase class I"/>
    <property type="match status" value="1"/>
</dbReference>
<dbReference type="HAMAP" id="MF_00147_B">
    <property type="entry name" value="TIM_B"/>
    <property type="match status" value="1"/>
</dbReference>
<dbReference type="InterPro" id="IPR013785">
    <property type="entry name" value="Aldolase_TIM"/>
</dbReference>
<dbReference type="InterPro" id="IPR035990">
    <property type="entry name" value="TIM_sf"/>
</dbReference>
<dbReference type="InterPro" id="IPR022896">
    <property type="entry name" value="TrioseP_Isoase_bac/euk"/>
</dbReference>
<dbReference type="InterPro" id="IPR000652">
    <property type="entry name" value="Triosephosphate_isomerase"/>
</dbReference>
<dbReference type="InterPro" id="IPR020861">
    <property type="entry name" value="Triosephosphate_isomerase_AS"/>
</dbReference>
<dbReference type="NCBIfam" id="TIGR00419">
    <property type="entry name" value="tim"/>
    <property type="match status" value="1"/>
</dbReference>
<dbReference type="PANTHER" id="PTHR21139">
    <property type="entry name" value="TRIOSEPHOSPHATE ISOMERASE"/>
    <property type="match status" value="1"/>
</dbReference>
<dbReference type="PANTHER" id="PTHR21139:SF41">
    <property type="entry name" value="TRIOSEPHOSPHATE ISOMERASE"/>
    <property type="match status" value="1"/>
</dbReference>
<dbReference type="Pfam" id="PF00121">
    <property type="entry name" value="TIM"/>
    <property type="match status" value="1"/>
</dbReference>
<dbReference type="SUPFAM" id="SSF51351">
    <property type="entry name" value="Triosephosphate isomerase (TIM)"/>
    <property type="match status" value="1"/>
</dbReference>
<dbReference type="PROSITE" id="PS00171">
    <property type="entry name" value="TIM_1"/>
    <property type="match status" value="1"/>
</dbReference>
<dbReference type="PROSITE" id="PS51440">
    <property type="entry name" value="TIM_2"/>
    <property type="match status" value="1"/>
</dbReference>
<feature type="chain" id="PRO_0000090170" description="Triosephosphate isomerase">
    <location>
        <begin position="1"/>
        <end position="248"/>
    </location>
</feature>
<feature type="active site" description="Electrophile" evidence="1">
    <location>
        <position position="95"/>
    </location>
</feature>
<feature type="active site" description="Proton acceptor" evidence="1">
    <location>
        <position position="165"/>
    </location>
</feature>
<feature type="binding site" evidence="1">
    <location>
        <position position="10"/>
    </location>
    <ligand>
        <name>substrate</name>
    </ligand>
</feature>
<feature type="binding site" evidence="1">
    <location>
        <position position="12"/>
    </location>
    <ligand>
        <name>substrate</name>
    </ligand>
</feature>
<gene>
    <name type="primary">TPI1</name>
</gene>
<keyword id="KW-0312">Gluconeogenesis</keyword>
<keyword id="KW-0324">Glycolysis</keyword>
<keyword id="KW-0413">Isomerase</keyword>
<reference key="1">
    <citation type="journal article" date="2001" name="Yeast">
        <title>Isolation and sequence analysis of the gene encoding triose phosphate isomerase from Zygosaccharomyces bailii.</title>
        <authorList>
            <person name="Merico A."/>
            <person name="Rodrigues F."/>
            <person name="Corte-Real M."/>
            <person name="Porro D."/>
            <person name="Maria Ranzi B."/>
            <person name="Compagno C."/>
        </authorList>
    </citation>
    <scope>NUCLEOTIDE SEQUENCE [GENOMIC DNA]</scope>
    <source>
        <strain>ISA 1307</strain>
    </source>
</reference>
<name>TPIS_ZYGBA</name>